<dbReference type="EMBL" id="CP000713">
    <property type="protein sequence ID" value="ABQ93387.1"/>
    <property type="molecule type" value="Genomic_DNA"/>
</dbReference>
<dbReference type="SMR" id="A5WCJ6"/>
<dbReference type="STRING" id="349106.PsycPRwf_0432"/>
<dbReference type="KEGG" id="prw:PsycPRwf_0432"/>
<dbReference type="eggNOG" id="COG0092">
    <property type="taxonomic scope" value="Bacteria"/>
</dbReference>
<dbReference type="HOGENOM" id="CLU_058591_0_2_6"/>
<dbReference type="GO" id="GO:0022627">
    <property type="term" value="C:cytosolic small ribosomal subunit"/>
    <property type="evidence" value="ECO:0007669"/>
    <property type="project" value="TreeGrafter"/>
</dbReference>
<dbReference type="GO" id="GO:0003729">
    <property type="term" value="F:mRNA binding"/>
    <property type="evidence" value="ECO:0007669"/>
    <property type="project" value="UniProtKB-UniRule"/>
</dbReference>
<dbReference type="GO" id="GO:0019843">
    <property type="term" value="F:rRNA binding"/>
    <property type="evidence" value="ECO:0007669"/>
    <property type="project" value="UniProtKB-UniRule"/>
</dbReference>
<dbReference type="GO" id="GO:0003735">
    <property type="term" value="F:structural constituent of ribosome"/>
    <property type="evidence" value="ECO:0007669"/>
    <property type="project" value="InterPro"/>
</dbReference>
<dbReference type="GO" id="GO:0006412">
    <property type="term" value="P:translation"/>
    <property type="evidence" value="ECO:0007669"/>
    <property type="project" value="UniProtKB-UniRule"/>
</dbReference>
<dbReference type="CDD" id="cd02412">
    <property type="entry name" value="KH-II_30S_S3"/>
    <property type="match status" value="1"/>
</dbReference>
<dbReference type="FunFam" id="3.30.1140.32:FF:000001">
    <property type="entry name" value="30S ribosomal protein S3"/>
    <property type="match status" value="1"/>
</dbReference>
<dbReference type="FunFam" id="3.30.300.20:FF:000001">
    <property type="entry name" value="30S ribosomal protein S3"/>
    <property type="match status" value="1"/>
</dbReference>
<dbReference type="Gene3D" id="3.30.300.20">
    <property type="match status" value="1"/>
</dbReference>
<dbReference type="Gene3D" id="3.30.1140.32">
    <property type="entry name" value="Ribosomal protein S3, C-terminal domain"/>
    <property type="match status" value="1"/>
</dbReference>
<dbReference type="HAMAP" id="MF_01309_B">
    <property type="entry name" value="Ribosomal_uS3_B"/>
    <property type="match status" value="1"/>
</dbReference>
<dbReference type="InterPro" id="IPR004087">
    <property type="entry name" value="KH_dom"/>
</dbReference>
<dbReference type="InterPro" id="IPR015946">
    <property type="entry name" value="KH_dom-like_a/b"/>
</dbReference>
<dbReference type="InterPro" id="IPR004044">
    <property type="entry name" value="KH_dom_type_2"/>
</dbReference>
<dbReference type="InterPro" id="IPR009019">
    <property type="entry name" value="KH_sf_prok-type"/>
</dbReference>
<dbReference type="InterPro" id="IPR036419">
    <property type="entry name" value="Ribosomal_S3_C_sf"/>
</dbReference>
<dbReference type="InterPro" id="IPR005704">
    <property type="entry name" value="Ribosomal_uS3_bac-typ"/>
</dbReference>
<dbReference type="InterPro" id="IPR001351">
    <property type="entry name" value="Ribosomal_uS3_C"/>
</dbReference>
<dbReference type="InterPro" id="IPR018280">
    <property type="entry name" value="Ribosomal_uS3_CS"/>
</dbReference>
<dbReference type="NCBIfam" id="TIGR01009">
    <property type="entry name" value="rpsC_bact"/>
    <property type="match status" value="1"/>
</dbReference>
<dbReference type="PANTHER" id="PTHR11760">
    <property type="entry name" value="30S/40S RIBOSOMAL PROTEIN S3"/>
    <property type="match status" value="1"/>
</dbReference>
<dbReference type="PANTHER" id="PTHR11760:SF19">
    <property type="entry name" value="SMALL RIBOSOMAL SUBUNIT PROTEIN US3C"/>
    <property type="match status" value="1"/>
</dbReference>
<dbReference type="Pfam" id="PF07650">
    <property type="entry name" value="KH_2"/>
    <property type="match status" value="1"/>
</dbReference>
<dbReference type="Pfam" id="PF00189">
    <property type="entry name" value="Ribosomal_S3_C"/>
    <property type="match status" value="1"/>
</dbReference>
<dbReference type="SMART" id="SM00322">
    <property type="entry name" value="KH"/>
    <property type="match status" value="1"/>
</dbReference>
<dbReference type="SUPFAM" id="SSF54814">
    <property type="entry name" value="Prokaryotic type KH domain (KH-domain type II)"/>
    <property type="match status" value="1"/>
</dbReference>
<dbReference type="SUPFAM" id="SSF54821">
    <property type="entry name" value="Ribosomal protein S3 C-terminal domain"/>
    <property type="match status" value="1"/>
</dbReference>
<dbReference type="PROSITE" id="PS50823">
    <property type="entry name" value="KH_TYPE_2"/>
    <property type="match status" value="1"/>
</dbReference>
<dbReference type="PROSITE" id="PS00548">
    <property type="entry name" value="RIBOSOMAL_S3"/>
    <property type="match status" value="1"/>
</dbReference>
<organism>
    <name type="scientific">Psychrobacter sp. (strain PRwf-1)</name>
    <dbReference type="NCBI Taxonomy" id="349106"/>
    <lineage>
        <taxon>Bacteria</taxon>
        <taxon>Pseudomonadati</taxon>
        <taxon>Pseudomonadota</taxon>
        <taxon>Gammaproteobacteria</taxon>
        <taxon>Moraxellales</taxon>
        <taxon>Moraxellaceae</taxon>
        <taxon>Psychrobacter</taxon>
    </lineage>
</organism>
<accession>A5WCJ6</accession>
<evidence type="ECO:0000255" key="1">
    <source>
        <dbReference type="HAMAP-Rule" id="MF_01309"/>
    </source>
</evidence>
<evidence type="ECO:0000256" key="2">
    <source>
        <dbReference type="SAM" id="MobiDB-lite"/>
    </source>
</evidence>
<evidence type="ECO:0000305" key="3"/>
<keyword id="KW-0687">Ribonucleoprotein</keyword>
<keyword id="KW-0689">Ribosomal protein</keyword>
<keyword id="KW-0694">RNA-binding</keyword>
<keyword id="KW-0699">rRNA-binding</keyword>
<reference key="1">
    <citation type="submission" date="2007-05" db="EMBL/GenBank/DDBJ databases">
        <title>Complete sequence of chromosome of Psychrobacter sp. PRwf-1.</title>
        <authorList>
            <consortium name="US DOE Joint Genome Institute"/>
            <person name="Copeland A."/>
            <person name="Lucas S."/>
            <person name="Lapidus A."/>
            <person name="Barry K."/>
            <person name="Detter J.C."/>
            <person name="Glavina del Rio T."/>
            <person name="Hammon N."/>
            <person name="Israni S."/>
            <person name="Dalin E."/>
            <person name="Tice H."/>
            <person name="Pitluck S."/>
            <person name="Chain P."/>
            <person name="Malfatti S."/>
            <person name="Shin M."/>
            <person name="Vergez L."/>
            <person name="Schmutz J."/>
            <person name="Larimer F."/>
            <person name="Land M."/>
            <person name="Hauser L."/>
            <person name="Kyrpides N."/>
            <person name="Kim E."/>
            <person name="Tiedje J."/>
            <person name="Richardson P."/>
        </authorList>
    </citation>
    <scope>NUCLEOTIDE SEQUENCE [LARGE SCALE GENOMIC DNA]</scope>
    <source>
        <strain>PRwf-1</strain>
    </source>
</reference>
<name>RS3_PSYWF</name>
<proteinExistence type="inferred from homology"/>
<sequence>MGQKVHPIGIRLGVVKKHNANWYADPKQYSEYLLNDLQVRDYLRKKLDNAMISHIMIERPTGAAKITISTARPGIVIGKKGEDIEKLQKELTKMMGVPAQVNIEEITSPDLDARLVAEGIASQLERRVMFRRAMKRAVQNSMRSGAQGIKVELSGRLGGAEIARTEWYREGRVPLHTLRADIDYASVRAETTYGTIGVKVWVFRGEILDGMDSVYNPPKEDKTRAPKRRGRSNSNRRNSDRANTDRG</sequence>
<protein>
    <recommendedName>
        <fullName evidence="1">Small ribosomal subunit protein uS3</fullName>
    </recommendedName>
    <alternativeName>
        <fullName evidence="3">30S ribosomal protein S3</fullName>
    </alternativeName>
</protein>
<comment type="function">
    <text evidence="1">Binds the lower part of the 30S subunit head. Binds mRNA in the 70S ribosome, positioning it for translation.</text>
</comment>
<comment type="subunit">
    <text evidence="1">Part of the 30S ribosomal subunit. Forms a tight complex with proteins S10 and S14.</text>
</comment>
<comment type="similarity">
    <text evidence="1">Belongs to the universal ribosomal protein uS3 family.</text>
</comment>
<gene>
    <name evidence="1" type="primary">rpsC</name>
    <name type="ordered locus">PsycPRwf_0432</name>
</gene>
<feature type="chain" id="PRO_1000086144" description="Small ribosomal subunit protein uS3">
    <location>
        <begin position="1"/>
        <end position="247"/>
    </location>
</feature>
<feature type="domain" description="KH type-2" evidence="1">
    <location>
        <begin position="39"/>
        <end position="107"/>
    </location>
</feature>
<feature type="region of interest" description="Disordered" evidence="2">
    <location>
        <begin position="213"/>
        <end position="247"/>
    </location>
</feature>
<feature type="compositionally biased region" description="Basic and acidic residues" evidence="2">
    <location>
        <begin position="237"/>
        <end position="247"/>
    </location>
</feature>